<organism>
    <name type="scientific">Proteus mirabilis (strain HI4320)</name>
    <dbReference type="NCBI Taxonomy" id="529507"/>
    <lineage>
        <taxon>Bacteria</taxon>
        <taxon>Pseudomonadati</taxon>
        <taxon>Pseudomonadota</taxon>
        <taxon>Gammaproteobacteria</taxon>
        <taxon>Enterobacterales</taxon>
        <taxon>Morganellaceae</taxon>
        <taxon>Proteus</taxon>
    </lineage>
</organism>
<protein>
    <recommendedName>
        <fullName evidence="1">Large ribosomal subunit protein bL17</fullName>
    </recommendedName>
    <alternativeName>
        <fullName evidence="2">50S ribosomal protein L17</fullName>
    </alternativeName>
</protein>
<keyword id="KW-1185">Reference proteome</keyword>
<keyword id="KW-0687">Ribonucleoprotein</keyword>
<keyword id="KW-0689">Ribosomal protein</keyword>
<name>RL17_PROMH</name>
<reference key="1">
    <citation type="journal article" date="2008" name="J. Bacteriol.">
        <title>Complete genome sequence of uropathogenic Proteus mirabilis, a master of both adherence and motility.</title>
        <authorList>
            <person name="Pearson M.M."/>
            <person name="Sebaihia M."/>
            <person name="Churcher C."/>
            <person name="Quail M.A."/>
            <person name="Seshasayee A.S."/>
            <person name="Luscombe N.M."/>
            <person name="Abdellah Z."/>
            <person name="Arrosmith C."/>
            <person name="Atkin B."/>
            <person name="Chillingworth T."/>
            <person name="Hauser H."/>
            <person name="Jagels K."/>
            <person name="Moule S."/>
            <person name="Mungall K."/>
            <person name="Norbertczak H."/>
            <person name="Rabbinowitsch E."/>
            <person name="Walker D."/>
            <person name="Whithead S."/>
            <person name="Thomson N.R."/>
            <person name="Rather P.N."/>
            <person name="Parkhill J."/>
            <person name="Mobley H.L.T."/>
        </authorList>
    </citation>
    <scope>NUCLEOTIDE SEQUENCE [LARGE SCALE GENOMIC DNA]</scope>
    <source>
        <strain>HI4320</strain>
    </source>
</reference>
<proteinExistence type="inferred from homology"/>
<sequence length="128" mass="14396">MRHRKSGRQLNRNSSHRQAMFRNMAGSLVRHEIIKTTLPKAKELRRVVEPLITLAKTDSVANRRLAFARTRDNEVVAKLFTVLGPRFASRAGGYTRILKCGFRAGDNAPMAYIELVDRADSETEAAAE</sequence>
<accession>B4F1L0</accession>
<dbReference type="EMBL" id="AM942759">
    <property type="protein sequence ID" value="CAR46432.1"/>
    <property type="molecule type" value="Genomic_DNA"/>
</dbReference>
<dbReference type="RefSeq" id="WP_004246940.1">
    <property type="nucleotide sequence ID" value="NC_010554.1"/>
</dbReference>
<dbReference type="SMR" id="B4F1L0"/>
<dbReference type="EnsemblBacteria" id="CAR46432">
    <property type="protein sequence ID" value="CAR46432"/>
    <property type="gene ID" value="PMI3281"/>
</dbReference>
<dbReference type="GeneID" id="93395978"/>
<dbReference type="KEGG" id="pmr:PMI3281"/>
<dbReference type="eggNOG" id="COG0203">
    <property type="taxonomic scope" value="Bacteria"/>
</dbReference>
<dbReference type="HOGENOM" id="CLU_074407_2_0_6"/>
<dbReference type="Proteomes" id="UP000008319">
    <property type="component" value="Chromosome"/>
</dbReference>
<dbReference type="GO" id="GO:0022625">
    <property type="term" value="C:cytosolic large ribosomal subunit"/>
    <property type="evidence" value="ECO:0007669"/>
    <property type="project" value="TreeGrafter"/>
</dbReference>
<dbReference type="GO" id="GO:0003735">
    <property type="term" value="F:structural constituent of ribosome"/>
    <property type="evidence" value="ECO:0007669"/>
    <property type="project" value="InterPro"/>
</dbReference>
<dbReference type="GO" id="GO:0006412">
    <property type="term" value="P:translation"/>
    <property type="evidence" value="ECO:0007669"/>
    <property type="project" value="UniProtKB-UniRule"/>
</dbReference>
<dbReference type="FunFam" id="3.90.1030.10:FF:000001">
    <property type="entry name" value="50S ribosomal protein L17"/>
    <property type="match status" value="1"/>
</dbReference>
<dbReference type="Gene3D" id="3.90.1030.10">
    <property type="entry name" value="Ribosomal protein L17"/>
    <property type="match status" value="1"/>
</dbReference>
<dbReference type="HAMAP" id="MF_01368">
    <property type="entry name" value="Ribosomal_bL17"/>
    <property type="match status" value="1"/>
</dbReference>
<dbReference type="InterPro" id="IPR000456">
    <property type="entry name" value="Ribosomal_bL17"/>
</dbReference>
<dbReference type="InterPro" id="IPR047859">
    <property type="entry name" value="Ribosomal_bL17_CS"/>
</dbReference>
<dbReference type="InterPro" id="IPR036373">
    <property type="entry name" value="Ribosomal_bL17_sf"/>
</dbReference>
<dbReference type="NCBIfam" id="TIGR00059">
    <property type="entry name" value="L17"/>
    <property type="match status" value="1"/>
</dbReference>
<dbReference type="PANTHER" id="PTHR14413:SF16">
    <property type="entry name" value="LARGE RIBOSOMAL SUBUNIT PROTEIN BL17M"/>
    <property type="match status" value="1"/>
</dbReference>
<dbReference type="PANTHER" id="PTHR14413">
    <property type="entry name" value="RIBOSOMAL PROTEIN L17"/>
    <property type="match status" value="1"/>
</dbReference>
<dbReference type="Pfam" id="PF01196">
    <property type="entry name" value="Ribosomal_L17"/>
    <property type="match status" value="1"/>
</dbReference>
<dbReference type="SUPFAM" id="SSF64263">
    <property type="entry name" value="Prokaryotic ribosomal protein L17"/>
    <property type="match status" value="1"/>
</dbReference>
<dbReference type="PROSITE" id="PS01167">
    <property type="entry name" value="RIBOSOMAL_L17"/>
    <property type="match status" value="1"/>
</dbReference>
<gene>
    <name evidence="1" type="primary">rplQ</name>
    <name type="ordered locus">PMI3281</name>
</gene>
<feature type="chain" id="PRO_1000144467" description="Large ribosomal subunit protein bL17">
    <location>
        <begin position="1"/>
        <end position="128"/>
    </location>
</feature>
<comment type="subunit">
    <text evidence="1">Part of the 50S ribosomal subunit. Contacts protein L32.</text>
</comment>
<comment type="similarity">
    <text evidence="1">Belongs to the bacterial ribosomal protein bL17 family.</text>
</comment>
<evidence type="ECO:0000255" key="1">
    <source>
        <dbReference type="HAMAP-Rule" id="MF_01368"/>
    </source>
</evidence>
<evidence type="ECO:0000305" key="2"/>